<evidence type="ECO:0000255" key="1"/>
<evidence type="ECO:0000256" key="2">
    <source>
        <dbReference type="SAM" id="MobiDB-lite"/>
    </source>
</evidence>
<evidence type="ECO:0000269" key="3">
    <source>
    </source>
</evidence>
<evidence type="ECO:0000269" key="4">
    <source>
    </source>
</evidence>
<evidence type="ECO:0000269" key="5">
    <source>
    </source>
</evidence>
<evidence type="ECO:0000269" key="6">
    <source>
    </source>
</evidence>
<evidence type="ECO:0000269" key="7">
    <source>
    </source>
</evidence>
<evidence type="ECO:0000269" key="8">
    <source>
    </source>
</evidence>
<evidence type="ECO:0000269" key="9">
    <source>
    </source>
</evidence>
<evidence type="ECO:0000269" key="10">
    <source>
    </source>
</evidence>
<evidence type="ECO:0000269" key="11">
    <source>
    </source>
</evidence>
<evidence type="ECO:0000269" key="12">
    <source>
    </source>
</evidence>
<evidence type="ECO:0000269" key="13">
    <source>
    </source>
</evidence>
<evidence type="ECO:0000303" key="14">
    <source>
    </source>
</evidence>
<evidence type="ECO:0000305" key="15"/>
<evidence type="ECO:0007744" key="16">
    <source>
        <dbReference type="PDB" id="1V7M"/>
    </source>
</evidence>
<evidence type="ECO:0007744" key="17">
    <source>
        <dbReference type="PDB" id="1V7N"/>
    </source>
</evidence>
<evidence type="ECO:0007744" key="18">
    <source>
        <dbReference type="PDB" id="8G04"/>
    </source>
</evidence>
<evidence type="ECO:0007829" key="19">
    <source>
        <dbReference type="PDB" id="1V7M"/>
    </source>
</evidence>
<evidence type="ECO:0007829" key="20">
    <source>
        <dbReference type="PDB" id="1V7N"/>
    </source>
</evidence>
<evidence type="ECO:0007829" key="21">
    <source>
        <dbReference type="PDB" id="8G04"/>
    </source>
</evidence>
<reference key="1">
    <citation type="journal article" date="1994" name="Nature">
        <title>Stimulation of megakaryocytopoiesis and thrombopoiesis by the c-Mpl ligand.</title>
        <authorList>
            <person name="de Sauvage F.J."/>
            <person name="Hass P.E."/>
            <person name="Spencer S.D."/>
            <person name="Malloy B.E."/>
            <person name="Gurney A.L."/>
            <person name="Spencer S.A."/>
            <person name="Darbonne W.C."/>
            <person name="Henzel W.J."/>
            <person name="Wong S.C."/>
            <person name="Kuang W.-J."/>
            <person name="Oles K.J."/>
            <person name="Hultgren B."/>
            <person name="Solberg L.A. Jr."/>
            <person name="Goeddel D.V."/>
            <person name="Eaton D.L."/>
        </authorList>
    </citation>
    <scope>NUCLEOTIDE SEQUENCE [MRNA] (ISOFORM 1)</scope>
    <source>
        <tissue>Fetal liver</tissue>
    </source>
</reference>
<reference key="2">
    <citation type="journal article" date="1994" name="Cell">
        <title>Identification and cloning of a megakaryocyte growth and development factor that is a ligand for the cytokine receptor Mpl.</title>
        <authorList>
            <person name="Bartley T.D."/>
            <person name="Bogenberger J."/>
            <person name="Hunt P."/>
            <person name="Li Y.-S."/>
            <person name="Lu H.S."/>
            <person name="Martin F."/>
            <person name="Chang M.-S."/>
            <person name="Samal B.B."/>
            <person name="Nichol J.L."/>
            <person name="Swift S."/>
            <person name="Johnson M.J."/>
            <person name="Hsu R.-Y."/>
            <person name="Parker V.P."/>
            <person name="Suggs S."/>
            <person name="Skrine J.D."/>
            <person name="Merewether L.A."/>
            <person name="Clogson C."/>
            <person name="Hsu E."/>
            <person name="Hokom M.M."/>
            <person name="Hornkohl A."/>
            <person name="Choi E."/>
            <person name="Pangelinan M."/>
            <person name="Sun Y."/>
            <person name="Mar V."/>
            <person name="McNich J."/>
            <person name="Simonet L."/>
            <person name="Jacobsen F."/>
            <person name="Xie C."/>
            <person name="Shutter J."/>
            <person name="Chute H."/>
            <person name="Basu R."/>
            <person name="Selander L."/>
            <person name="Trollinger D."/>
            <person name="Sieu L."/>
            <person name="Padilla D."/>
            <person name="Trail G."/>
            <person name="Elliott G."/>
            <person name="Izumi R."/>
            <person name="Covey T."/>
            <person name="Crouse J."/>
            <person name="Garcia A."/>
            <person name="Xu W."/>
            <person name="del Castillo J."/>
            <person name="Biron J."/>
            <person name="Cole S."/>
            <person name="Hu M.C.-T."/>
            <person name="Pacifici R."/>
            <person name="Ponting I."/>
            <person name="Saris C."/>
            <person name="Wen D."/>
            <person name="Yung Y.P."/>
            <person name="Lin H."/>
            <person name="Bosselman R.A."/>
        </authorList>
    </citation>
    <scope>NUCLEOTIDE SEQUENCE [MRNA] (ISOFORM 1)</scope>
    <source>
        <tissue>Fetal liver</tissue>
    </source>
</reference>
<reference key="3">
    <citation type="journal article" date="1994" name="Proc. Natl. Acad. Sci. U.S.A.">
        <title>Human thrombopoietin: gene structure, cDNA sequence, expression, and chromosomal localization.</title>
        <authorList>
            <person name="Foster D.C."/>
            <person name="Sprecher C.A."/>
            <person name="Grant F.J."/>
            <person name="Kramer J.M."/>
            <person name="Kuijper J.L."/>
            <person name="Holly R.D."/>
            <person name="Whitmore T.E."/>
            <person name="Heipel M.D."/>
            <person name="Bell L.A.N."/>
            <person name="Ching A.F."/>
            <person name="McGrane V."/>
            <person name="Hart C."/>
            <person name="O'Hara P.J."/>
            <person name="Lok S."/>
        </authorList>
    </citation>
    <scope>NUCLEOTIDE SEQUENCE [GENOMIC DNA / MRNA] (ISOFORM 1)</scope>
</reference>
<reference key="4">
    <citation type="journal article" date="1994" name="FEBS Lett.">
        <title>Molecular cloning and chromosomal localization of the human thrombopoietin gene.</title>
        <authorList>
            <person name="Sohma Y."/>
            <person name="Akahori H."/>
            <person name="Seki N."/>
            <person name="Hori T.-A."/>
            <person name="Ogami K."/>
            <person name="Kawamura K."/>
            <person name="Miyazaki H."/>
        </authorList>
    </citation>
    <scope>NUCLEOTIDE SEQUENCE [GENOMIC DNA] (ISOFORM 1)</scope>
</reference>
<reference key="5">
    <citation type="journal article" date="1995" name="Blood">
        <title>Genomic structure, chromosomal localization, and conserved alternative splice forms of thrombopoietin.</title>
        <authorList>
            <person name="Gurney A.L."/>
            <person name="Kuang W.-J."/>
            <person name="Xie M.-H."/>
            <person name="Malloy B.E."/>
            <person name="Eaton D.L."/>
            <person name="de Sauvage F.J."/>
        </authorList>
    </citation>
    <scope>NUCLEOTIDE SEQUENCE [GENOMIC DNA] (ISOFORMS 1 AND 2)</scope>
</reference>
<reference key="6">
    <citation type="journal article" date="1995" name="J. Biochem.">
        <title>Purification and characterization of thrombopoietin.</title>
        <authorList>
            <person name="Kato T."/>
            <person name="Ogami K."/>
            <person name="Shimada Y."/>
            <person name="Iwamatsu A."/>
            <person name="Sohma Y."/>
            <person name="Akahori H."/>
            <person name="Horie K."/>
            <person name="Kokubo A."/>
            <person name="Kudo Y."/>
            <person name="Maeda E."/>
            <person name="Kobayashi K."/>
            <person name="Ohashi H."/>
            <person name="Ozawa T."/>
            <person name="Inoue H."/>
            <person name="Kawamura K."/>
            <person name="Miyazaki H."/>
        </authorList>
    </citation>
    <scope>NUCLEOTIDE SEQUENCE [MRNA] (ISOFORM 1)</scope>
    <source>
        <tissue>Liver</tissue>
    </source>
</reference>
<reference key="7">
    <citation type="journal article" date="1995" name="J. Biol. Chem.">
        <title>Cloning and characterization of the human megakaryocyte growth and development factor (MGDF) gene.</title>
        <authorList>
            <person name="Chang M."/>
            <person name="McNinch J."/>
            <person name="Basu R."/>
            <person name="Shutter J."/>
            <person name="Hsu R."/>
            <person name="Perkins C."/>
            <person name="Mar V."/>
            <person name="Suggs S."/>
            <person name="Welcher A."/>
            <person name="Li L."/>
            <person name="Lu H."/>
            <person name="Bartley T."/>
            <person name="Hunt P."/>
            <person name="Martin F."/>
            <person name="Samal B."/>
            <person name="Bogenberger J."/>
        </authorList>
    </citation>
    <scope>NUCLEOTIDE SEQUENCE [GENOMIC DNA] (ISOFORM 1)</scope>
    <scope>SUBCELLULAR LOCATION</scope>
    <source>
        <tissue>Placenta</tissue>
    </source>
</reference>
<reference key="8">
    <citation type="submission" date="1996-05" db="EMBL/GenBank/DDBJ databases">
        <title>Cloning and sequencing of human thrombopoietin.</title>
        <authorList>
            <person name="Im S.H."/>
            <person name="Lee W.S."/>
            <person name="Chung K.H."/>
        </authorList>
    </citation>
    <scope>NUCLEOTIDE SEQUENCE [GENOMIC DNA] (ISOFORMS 1 AND 3)</scope>
</reference>
<reference key="9">
    <citation type="journal article" date="2004" name="Genome Res.">
        <title>The status, quality, and expansion of the NIH full-length cDNA project: the Mammalian Gene Collection (MGC).</title>
        <authorList>
            <consortium name="The MGC Project Team"/>
        </authorList>
    </citation>
    <scope>NUCLEOTIDE SEQUENCE [LARGE SCALE MRNA] (ISOFORMS 1 AND 2)</scope>
    <source>
        <tissue>Brain</tissue>
        <tissue>Testis</tissue>
    </source>
</reference>
<reference key="10">
    <citation type="journal article" date="1998" name="Nat. Genet.">
        <title>An activating splice donor mutation in the thrombopoietin gene causes hereditary thrombocythaemia.</title>
        <authorList>
            <person name="Wiestner A."/>
            <person name="Schlemper R.J."/>
            <person name="van der Maas A.P.C."/>
            <person name="Skoda R.C."/>
        </authorList>
    </citation>
    <scope>INVOLVEMENT IN THCYT1</scope>
</reference>
<reference key="11">
    <citation type="journal article" date="1996" name="Biochemistry">
        <title>Peptide, disulfide, and glycosylation mapping of recombinant human thrombopoietin from ser1 to Arg246.</title>
        <authorList>
            <person name="Hoffman R.C."/>
            <person name="Andersen H."/>
            <person name="Walker K."/>
            <person name="Krakover J.D."/>
            <person name="Patel S."/>
            <person name="Stamm M.R."/>
            <person name="Osborn S.G."/>
        </authorList>
    </citation>
    <scope>DISULFIDE BONDS</scope>
    <scope>GLYCOSYLATION AT SER-22; THR-58; THR-131; THR-179; THR-180; SER-184; ASN-197; ASN-206; THR-213; ASN-234; ASN-255 AND SER-265</scope>
</reference>
<reference key="12">
    <citation type="journal article" date="2013" name="Blood">
        <title>Exome sequencing reveals a thrombopoietin ligand mutation in a Micronesian family with autosomal recessive aplastic anemia.</title>
        <authorList>
            <person name="Dasouki M.J."/>
            <person name="Rafi S.K."/>
            <person name="Olm-Shipman A.J."/>
            <person name="Wilson N.R."/>
            <person name="Abhyankar S."/>
            <person name="Ganter B."/>
            <person name="Furness L.M."/>
            <person name="Fang J."/>
            <person name="Calado R.T."/>
            <person name="Saadi I."/>
        </authorList>
    </citation>
    <scope>FUNCTION</scope>
    <scope>INVOLVEMENT IN CAMT2</scope>
    <scope>VARIANT CAMT2 CYS-38</scope>
</reference>
<reference key="13">
    <citation type="journal article" date="2018" name="Br. J. Haematol.">
        <title>A new form of inherited thrombocytopenia due to monoallelic loss of function mutation in the thrombopoietin gene.</title>
        <authorList>
            <person name="Noris P."/>
            <person name="Marconi C."/>
            <person name="De Rocco D."/>
            <person name="Melazzini F."/>
            <person name="Pippucci T."/>
            <person name="Loffredo G."/>
            <person name="Giangregorio T."/>
            <person name="Pecci A."/>
            <person name="Seri M."/>
            <person name="Savoia A."/>
        </authorList>
    </citation>
    <scope>INVOLVEMENT IN THC9</scope>
    <scope>VARIANT THC9 31-ARG--GLY-353 DEL</scope>
</reference>
<reference key="14">
    <citation type="journal article" date="2018" name="EMBO Mol. Med.">
        <title>Thrombopoietin mutation in congenital amegakaryocytic thrombocytopenia treatable with romiplostim.</title>
        <authorList>
            <person name="Pecci A."/>
            <person name="Ragab I."/>
            <person name="Bozzi V."/>
            <person name="De Rocco D."/>
            <person name="Barozzi S."/>
            <person name="Giangregorio T."/>
            <person name="Ali H."/>
            <person name="Melazzini F."/>
            <person name="Sallam M."/>
            <person name="Alfano C."/>
            <person name="Pastore A."/>
            <person name="Balduini C.L."/>
            <person name="Savoia A."/>
        </authorList>
    </citation>
    <scope>FUNCTION</scope>
    <scope>VARIANT CAMT2 CYS-119</scope>
    <scope>CHARACTERIZATION OF VARIANTS CAMT2 CYS-38 AND CYS-119</scope>
</reference>
<reference key="15">
    <citation type="journal article" date="2023" name="Haematologica">
        <title>Defective binding of ETS1 and STAT4 due to a mutation in the promoter region of THPO as a novel mechanism of congenital amegakaryocytic thrombocytopenia.</title>
        <authorList>
            <person name="Capaci V."/>
            <person name="Adam E."/>
            <person name="Bar-Joseph I."/>
            <person name="Faleschini M."/>
            <person name="Pecci A."/>
            <person name="Savoia A."/>
        </authorList>
    </citation>
    <scope>INVOLVEMENT IN CAMT2</scope>
</reference>
<reference key="16">
    <citation type="journal article" date="2004" name="Proc. Natl. Acad. Sci. U.S.A.">
        <title>Structure of the receptor-binding domain of human thrombopoietin determined by complexation with a neutralizing antibody fragment.</title>
        <authorList>
            <person name="Feese M.D."/>
            <person name="Tamada T."/>
            <person name="Kato Y."/>
            <person name="Maeda Y."/>
            <person name="Hirose M."/>
            <person name="Matsukura Y."/>
            <person name="Shigematsu H."/>
            <person name="Muto T."/>
            <person name="Matsumoto A."/>
            <person name="Watarai H."/>
            <person name="Ogami K."/>
            <person name="Tahara T."/>
            <person name="Kato T."/>
            <person name="Miyazaki H."/>
            <person name="Kuroki R."/>
        </authorList>
    </citation>
    <scope>X-RAY CRYSTALLOGRAPHY (2.51 ANGSTROMS) OF 22-184 IN COMPLEX WITH ANTIBODY</scope>
    <scope>DISULFIDE BONDS</scope>
</reference>
<reference evidence="18" key="17">
    <citation type="journal article" date="2023" name="Cell">
        <title>Structure of the thrombopoietin-MPL receptor complex is a blueprint for biasing hematopoiesis.</title>
        <authorList>
            <person name="Tsutsumi N."/>
            <person name="Masoumi Z."/>
            <person name="James S.C."/>
            <person name="Tucker J.A."/>
            <person name="Winkelmann H."/>
            <person name="Grey W."/>
            <person name="Picton L.K."/>
            <person name="Moss L."/>
            <person name="Wilson S.C."/>
            <person name="Caveney N.A."/>
            <person name="Jude K.M."/>
            <person name="Gati C."/>
            <person name="Piehler J."/>
            <person name="Hitchcock I.S."/>
            <person name="Garcia K.C."/>
        </authorList>
    </citation>
    <scope>STRUCTURE BY ELECTRON MICROSCOPY (3.40 ANGSTROMS) OF 22-184</scope>
    <scope>DISULFIDE BONDS</scope>
    <scope>INTERACTION WITH MPL/TPOR</scope>
</reference>
<reference key="18">
    <citation type="journal article" date="2017" name="Blood">
        <title>Bone marrow failure unresponsive to bone marrow transplant is caused by mutations in thrombopoietin.</title>
        <authorList>
            <person name="Seo A."/>
            <person name="Ben-Harosh M."/>
            <person name="Sirin M."/>
            <person name="Stein J."/>
            <person name="Dgany O."/>
            <person name="Kaplelushnik J."/>
            <person name="Hoenig M."/>
            <person name="Pannicke U."/>
            <person name="Lorenz M."/>
            <person name="Schwarz K."/>
            <person name="Stockklausner C."/>
            <person name="Walsh T."/>
            <person name="Gulsuner S."/>
            <person name="Lee M.K."/>
            <person name="Sendamarai A."/>
            <person name="Sanchez-Bonilla M."/>
            <person name="King M.C."/>
            <person name="Cario H."/>
            <person name="Kulozik A.E."/>
            <person name="Debatin K.M."/>
            <person name="Schulz A."/>
            <person name="Tamary H."/>
            <person name="Shimamura A."/>
        </authorList>
    </citation>
    <scope>VARIANTS CAMT2 TRP-99 AND 157-ARG--GLY-353 DEL</scope>
</reference>
<reference key="19">
    <citation type="journal article" date="2020" name="Blood Adv.">
        <title>Monoallelic loss-of-function THPO variants cause heritable thrombocytopenia.</title>
        <authorList>
            <consortium name="NIHR BioResource"/>
            <person name="Cornish N."/>
            <person name="Aungraheeta M.R."/>
            <person name="FitzGibbon L."/>
            <person name="Burley K."/>
            <person name="Alibhai D."/>
            <person name="Collins J."/>
            <person name="Greene D."/>
            <person name="Downes K."/>
            <person name="Westbury S.K."/>
            <person name="Turro E."/>
            <person name="Mumford A.D."/>
        </authorList>
    </citation>
    <scope>VARIANT THC9 TRP-99</scope>
    <scope>CHARACTERIZATION OF VARIANT THC9 TRP-99</scope>
    <scope>SUBCELLULAR LOCATION</scope>
</reference>
<accession>P40225</accession>
<accession>A1L3Y0</accession>
<accession>B7ZLR8</accession>
<accession>B9EGA8</accession>
<accession>Q13020</accession>
<accession>Q15790</accession>
<accession>Q15791</accession>
<accession>Q15792</accession>
<dbReference type="EMBL" id="L33410">
    <property type="protein sequence ID" value="AAA59857.1"/>
    <property type="molecule type" value="mRNA"/>
</dbReference>
<dbReference type="EMBL" id="U11025">
    <property type="protein sequence ID" value="AAA50553.1"/>
    <property type="molecule type" value="mRNA"/>
</dbReference>
<dbReference type="EMBL" id="L36051">
    <property type="protein sequence ID" value="AAC37568.1"/>
    <property type="molecule type" value="Genomic_DNA"/>
</dbReference>
<dbReference type="EMBL" id="L36052">
    <property type="protein sequence ID" value="AAC37566.1"/>
    <property type="molecule type" value="mRNA"/>
</dbReference>
<dbReference type="EMBL" id="D32046">
    <property type="protein sequence ID" value="BAA06807.1"/>
    <property type="molecule type" value="Genomic_DNA"/>
</dbReference>
<dbReference type="EMBL" id="S76771">
    <property type="protein sequence ID" value="AAB33390.1"/>
    <property type="molecule type" value="Genomic_DNA"/>
</dbReference>
<dbReference type="EMBL" id="D32047">
    <property type="protein sequence ID" value="BAA21930.1"/>
    <property type="molecule type" value="mRNA"/>
</dbReference>
<dbReference type="EMBL" id="U59493">
    <property type="protein sequence ID" value="AAB03392.1"/>
    <property type="molecule type" value="mRNA"/>
</dbReference>
<dbReference type="EMBL" id="U59494">
    <property type="protein sequence ID" value="AAB03393.1"/>
    <property type="molecule type" value="mRNA"/>
</dbReference>
<dbReference type="EMBL" id="U59495">
    <property type="protein sequence ID" value="AAB03394.1"/>
    <property type="molecule type" value="mRNA"/>
</dbReference>
<dbReference type="EMBL" id="U17071">
    <property type="protein sequence ID" value="AAA74083.1"/>
    <property type="molecule type" value="Genomic_DNA"/>
</dbReference>
<dbReference type="EMBL" id="BC130322">
    <property type="protein sequence ID" value="AAI30323.1"/>
    <property type="molecule type" value="mRNA"/>
</dbReference>
<dbReference type="EMBL" id="BC136338">
    <property type="protein sequence ID" value="AAI36339.1"/>
    <property type="molecule type" value="mRNA"/>
</dbReference>
<dbReference type="EMBL" id="BC143982">
    <property type="protein sequence ID" value="AAI43983.1"/>
    <property type="molecule type" value="mRNA"/>
</dbReference>
<dbReference type="CCDS" id="CCDS3265.1">
    <molecule id="P40225-1"/>
</dbReference>
<dbReference type="CCDS" id="CCDS54693.1">
    <molecule id="P40225-2"/>
</dbReference>
<dbReference type="PIR" id="G02729">
    <property type="entry name" value="G02729"/>
</dbReference>
<dbReference type="PIR" id="I59281">
    <property type="entry name" value="I80105"/>
</dbReference>
<dbReference type="RefSeq" id="NP_000451.1">
    <molecule id="P40225-1"/>
    <property type="nucleotide sequence ID" value="NM_000460.4"/>
</dbReference>
<dbReference type="RefSeq" id="NP_001171068.1">
    <molecule id="P40225-2"/>
    <property type="nucleotide sequence ID" value="NM_001177597.2"/>
</dbReference>
<dbReference type="RefSeq" id="NP_001171069.1">
    <property type="nucleotide sequence ID" value="NM_001177598.2"/>
</dbReference>
<dbReference type="RefSeq" id="NP_001276926.1">
    <property type="nucleotide sequence ID" value="NM_001289997.1"/>
</dbReference>
<dbReference type="RefSeq" id="NP_001276927.1">
    <molecule id="P40225-1"/>
    <property type="nucleotide sequence ID" value="NM_001289998.1"/>
</dbReference>
<dbReference type="RefSeq" id="NP_001276932.1">
    <property type="nucleotide sequence ID" value="NM_001290003.1"/>
</dbReference>
<dbReference type="RefSeq" id="NP_001276951.1">
    <molecule id="P40225-2"/>
    <property type="nucleotide sequence ID" value="NM_001290022.1"/>
</dbReference>
<dbReference type="RefSeq" id="NP_001276955.1">
    <property type="nucleotide sequence ID" value="NM_001290026.1"/>
</dbReference>
<dbReference type="RefSeq" id="NP_001276956.1">
    <property type="nucleotide sequence ID" value="NM_001290027.1"/>
</dbReference>
<dbReference type="RefSeq" id="NP_001276957.1">
    <molecule id="P40225-1"/>
    <property type="nucleotide sequence ID" value="NM_001290028.1"/>
</dbReference>
<dbReference type="PDB" id="1V7M">
    <property type="method" value="X-ray"/>
    <property type="resolution" value="2.51 A"/>
    <property type="chains" value="V/X=22-184"/>
</dbReference>
<dbReference type="PDB" id="1V7N">
    <property type="method" value="X-ray"/>
    <property type="resolution" value="3.30 A"/>
    <property type="chains" value="V/X/Y/Z=22-184"/>
</dbReference>
<dbReference type="PDB" id="8G04">
    <property type="method" value="EM"/>
    <property type="resolution" value="3.40 A"/>
    <property type="chains" value="A=22-184"/>
</dbReference>
<dbReference type="PDBsum" id="1V7M"/>
<dbReference type="PDBsum" id="1V7N"/>
<dbReference type="PDBsum" id="8G04"/>
<dbReference type="EMDB" id="EMD-29644"/>
<dbReference type="SMR" id="P40225"/>
<dbReference type="BioGRID" id="112922">
    <property type="interactions" value="6"/>
</dbReference>
<dbReference type="CORUM" id="P40225"/>
<dbReference type="DIP" id="DIP-5729N"/>
<dbReference type="ELM" id="P40225"/>
<dbReference type="FunCoup" id="P40225">
    <property type="interactions" value="521"/>
</dbReference>
<dbReference type="IntAct" id="P40225">
    <property type="interactions" value="3"/>
</dbReference>
<dbReference type="STRING" id="9606.ENSP00000494504"/>
<dbReference type="ChEMBL" id="CHEMBL1293256"/>
<dbReference type="GlyConnect" id="592">
    <property type="glycosylation" value="12 N-Linked glycans, 4 O-Linked glycans"/>
</dbReference>
<dbReference type="GlyCosmos" id="P40225">
    <property type="glycosylation" value="14 sites, 32 glycans"/>
</dbReference>
<dbReference type="GlyGen" id="P40225">
    <property type="glycosylation" value="17 sites, 25 N-linked glycans (2 sites), 7 O-linked glycans (1 site)"/>
</dbReference>
<dbReference type="iPTMnet" id="P40225"/>
<dbReference type="PhosphoSitePlus" id="P40225"/>
<dbReference type="BioMuta" id="THPO"/>
<dbReference type="DMDM" id="730982"/>
<dbReference type="jPOST" id="P40225"/>
<dbReference type="MassIVE" id="P40225"/>
<dbReference type="PaxDb" id="9606-ENSP00000204615"/>
<dbReference type="PeptideAtlas" id="P40225"/>
<dbReference type="ProteomicsDB" id="55350">
    <molecule id="P40225-1"/>
</dbReference>
<dbReference type="ProteomicsDB" id="55351">
    <molecule id="P40225-2"/>
</dbReference>
<dbReference type="ProteomicsDB" id="55352">
    <molecule id="P40225-3"/>
</dbReference>
<dbReference type="ABCD" id="P40225">
    <property type="antibodies" value="1 sequenced antibody"/>
</dbReference>
<dbReference type="Antibodypedia" id="19145">
    <property type="antibodies" value="640 antibodies from 36 providers"/>
</dbReference>
<dbReference type="DNASU" id="7066"/>
<dbReference type="Ensembl" id="ENST00000445696.6">
    <molecule id="P40225-2"/>
    <property type="protein sequence ID" value="ENSP00000410763.2"/>
    <property type="gene ID" value="ENSG00000090534.20"/>
</dbReference>
<dbReference type="Ensembl" id="ENST00000647395.1">
    <molecule id="P40225-1"/>
    <property type="protein sequence ID" value="ENSP00000494504.1"/>
    <property type="gene ID" value="ENSG00000090534.20"/>
</dbReference>
<dbReference type="GeneID" id="7066"/>
<dbReference type="KEGG" id="hsa:7066"/>
<dbReference type="MANE-Select" id="ENST00000647395.1">
    <property type="protein sequence ID" value="ENSP00000494504.1"/>
    <property type="RefSeq nucleotide sequence ID" value="NM_000460.4"/>
    <property type="RefSeq protein sequence ID" value="NP_000451.1"/>
</dbReference>
<dbReference type="UCSC" id="uc003fol.2">
    <molecule id="P40225-1"/>
    <property type="organism name" value="human"/>
</dbReference>
<dbReference type="AGR" id="HGNC:11795"/>
<dbReference type="CTD" id="7066"/>
<dbReference type="DisGeNET" id="7066"/>
<dbReference type="GeneCards" id="THPO"/>
<dbReference type="HGNC" id="HGNC:11795">
    <property type="gene designation" value="THPO"/>
</dbReference>
<dbReference type="HPA" id="ENSG00000090534">
    <property type="expression patterns" value="Tissue enriched (liver)"/>
</dbReference>
<dbReference type="MalaCards" id="THPO"/>
<dbReference type="MIM" id="187950">
    <property type="type" value="phenotype"/>
</dbReference>
<dbReference type="MIM" id="600044">
    <property type="type" value="gene"/>
</dbReference>
<dbReference type="MIM" id="620478">
    <property type="type" value="phenotype"/>
</dbReference>
<dbReference type="MIM" id="620481">
    <property type="type" value="phenotype"/>
</dbReference>
<dbReference type="neXtProt" id="NX_P40225"/>
<dbReference type="OpenTargets" id="ENSG00000090534"/>
<dbReference type="Orphanet" id="3319">
    <property type="disease" value="Congenital amegakaryocytic thrombocytopenia"/>
</dbReference>
<dbReference type="Orphanet" id="71493">
    <property type="disease" value="Familial thrombocytosis"/>
</dbReference>
<dbReference type="Orphanet" id="397692">
    <property type="disease" value="Hereditary isolated aplastic anemia"/>
</dbReference>
<dbReference type="Orphanet" id="329319">
    <property type="disease" value="Thrombocythemia with distal limb defects"/>
</dbReference>
<dbReference type="PharmGKB" id="PA36506"/>
<dbReference type="VEuPathDB" id="HostDB:ENSG00000090534"/>
<dbReference type="eggNOG" id="ENOG502S9T0">
    <property type="taxonomic scope" value="Eukaryota"/>
</dbReference>
<dbReference type="GeneTree" id="ENSGT00390000006294"/>
<dbReference type="HOGENOM" id="CLU_039844_0_0_1"/>
<dbReference type="InParanoid" id="P40225"/>
<dbReference type="OMA" id="PILCARQ"/>
<dbReference type="OrthoDB" id="9892121at2759"/>
<dbReference type="PAN-GO" id="P40225">
    <property type="GO annotations" value="5 GO annotations based on evolutionary models"/>
</dbReference>
<dbReference type="PhylomeDB" id="P40225"/>
<dbReference type="TreeFam" id="TF338084"/>
<dbReference type="PathwayCommons" id="P40225"/>
<dbReference type="Reactome" id="R-HSA-76009">
    <property type="pathway name" value="Platelet Aggregation (Plug Formation)"/>
</dbReference>
<dbReference type="SignaLink" id="P40225"/>
<dbReference type="SIGNOR" id="P40225"/>
<dbReference type="BioGRID-ORCS" id="7066">
    <property type="hits" value="7 hits in 1139 CRISPR screens"/>
</dbReference>
<dbReference type="ChiTaRS" id="THPO">
    <property type="organism name" value="human"/>
</dbReference>
<dbReference type="EvolutionaryTrace" id="P40225"/>
<dbReference type="GeneWiki" id="Thrombopoietin"/>
<dbReference type="GenomeRNAi" id="7066"/>
<dbReference type="Pharos" id="P40225">
    <property type="development level" value="Tbio"/>
</dbReference>
<dbReference type="PRO" id="PR:P40225"/>
<dbReference type="Proteomes" id="UP000005640">
    <property type="component" value="Chromosome 3"/>
</dbReference>
<dbReference type="RNAct" id="P40225">
    <property type="molecule type" value="protein"/>
</dbReference>
<dbReference type="Bgee" id="ENSG00000090534">
    <property type="expression patterns" value="Expressed in right lobe of liver and 93 other cell types or tissues"/>
</dbReference>
<dbReference type="ExpressionAtlas" id="P40225">
    <property type="expression patterns" value="baseline and differential"/>
</dbReference>
<dbReference type="GO" id="GO:0005576">
    <property type="term" value="C:extracellular region"/>
    <property type="evidence" value="ECO:0000318"/>
    <property type="project" value="GO_Central"/>
</dbReference>
<dbReference type="GO" id="GO:0005615">
    <property type="term" value="C:extracellular space"/>
    <property type="evidence" value="ECO:0000314"/>
    <property type="project" value="UniProt"/>
</dbReference>
<dbReference type="GO" id="GO:0005125">
    <property type="term" value="F:cytokine activity"/>
    <property type="evidence" value="ECO:0000314"/>
    <property type="project" value="UniProt"/>
</dbReference>
<dbReference type="GO" id="GO:0008083">
    <property type="term" value="F:growth factor activity"/>
    <property type="evidence" value="ECO:0000304"/>
    <property type="project" value="UniProtKB"/>
</dbReference>
<dbReference type="GO" id="GO:0005179">
    <property type="term" value="F:hormone activity"/>
    <property type="evidence" value="ECO:0007669"/>
    <property type="project" value="UniProtKB-KW"/>
</dbReference>
<dbReference type="GO" id="GO:0005102">
    <property type="term" value="F:signaling receptor binding"/>
    <property type="evidence" value="ECO:0000318"/>
    <property type="project" value="GO_Central"/>
</dbReference>
<dbReference type="GO" id="GO:0008283">
    <property type="term" value="P:cell population proliferation"/>
    <property type="evidence" value="ECO:0007669"/>
    <property type="project" value="InterPro"/>
</dbReference>
<dbReference type="GO" id="GO:0097696">
    <property type="term" value="P:cell surface receptor signaling pathway via STAT"/>
    <property type="evidence" value="ECO:0000314"/>
    <property type="project" value="ARUK-UCL"/>
</dbReference>
<dbReference type="GO" id="GO:0035855">
    <property type="term" value="P:megakaryocyte development"/>
    <property type="evidence" value="ECO:0000314"/>
    <property type="project" value="ARUK-UCL"/>
</dbReference>
<dbReference type="GO" id="GO:0030219">
    <property type="term" value="P:megakaryocyte differentiation"/>
    <property type="evidence" value="ECO:0000314"/>
    <property type="project" value="UniProtKB"/>
</dbReference>
<dbReference type="GO" id="GO:0008284">
    <property type="term" value="P:positive regulation of cell population proliferation"/>
    <property type="evidence" value="ECO:0000314"/>
    <property type="project" value="ARUK-UCL"/>
</dbReference>
<dbReference type="GO" id="GO:0070374">
    <property type="term" value="P:positive regulation of ERK1 and ERK2 cascade"/>
    <property type="evidence" value="ECO:0000250"/>
    <property type="project" value="UniProtKB"/>
</dbReference>
<dbReference type="GO" id="GO:1902035">
    <property type="term" value="P:positive regulation of hematopoietic stem cell proliferation"/>
    <property type="evidence" value="ECO:0000314"/>
    <property type="project" value="MGI"/>
</dbReference>
<dbReference type="GO" id="GO:0043410">
    <property type="term" value="P:positive regulation of MAPK cascade"/>
    <property type="evidence" value="ECO:0000314"/>
    <property type="project" value="ARUK-UCL"/>
</dbReference>
<dbReference type="GO" id="GO:0045654">
    <property type="term" value="P:positive regulation of megakaryocyte differentiation"/>
    <property type="evidence" value="ECO:0000250"/>
    <property type="project" value="UniProtKB"/>
</dbReference>
<dbReference type="GO" id="GO:0051897">
    <property type="term" value="P:positive regulation of phosphatidylinositol 3-kinase/protein kinase B signal transduction"/>
    <property type="evidence" value="ECO:0000314"/>
    <property type="project" value="ARUK-UCL"/>
</dbReference>
<dbReference type="GO" id="GO:0001934">
    <property type="term" value="P:positive regulation of protein phosphorylation"/>
    <property type="evidence" value="ECO:0000250"/>
    <property type="project" value="UniProtKB"/>
</dbReference>
<dbReference type="GO" id="GO:0038163">
    <property type="term" value="P:thrombopoietin-mediated signaling pathway"/>
    <property type="evidence" value="ECO:0000314"/>
    <property type="project" value="ARUK-UCL"/>
</dbReference>
<dbReference type="FunFam" id="1.20.1250.10:FF:000015">
    <property type="entry name" value="thrombopoietin isoform X2"/>
    <property type="match status" value="1"/>
</dbReference>
<dbReference type="Gene3D" id="1.20.1250.10">
    <property type="match status" value="1"/>
</dbReference>
<dbReference type="InterPro" id="IPR009079">
    <property type="entry name" value="4_helix_cytokine-like_core"/>
</dbReference>
<dbReference type="InterPro" id="IPR019767">
    <property type="entry name" value="EPO/TPO_CS"/>
</dbReference>
<dbReference type="InterPro" id="IPR001323">
    <property type="entry name" value="EPO_TPO"/>
</dbReference>
<dbReference type="InterPro" id="IPR003978">
    <property type="entry name" value="Thrombopoietin"/>
</dbReference>
<dbReference type="PANTHER" id="PTHR10560">
    <property type="entry name" value="THROMBOPOIETIN"/>
    <property type="match status" value="1"/>
</dbReference>
<dbReference type="PANTHER" id="PTHR10560:SF0">
    <property type="entry name" value="THROMBOPOIETIN"/>
    <property type="match status" value="1"/>
</dbReference>
<dbReference type="Pfam" id="PF00758">
    <property type="entry name" value="EPO_TPO"/>
    <property type="match status" value="1"/>
</dbReference>
<dbReference type="PRINTS" id="PR01485">
    <property type="entry name" value="THROMBOPTN"/>
</dbReference>
<dbReference type="SUPFAM" id="SSF47266">
    <property type="entry name" value="4-helical cytokines"/>
    <property type="match status" value="1"/>
</dbReference>
<dbReference type="PROSITE" id="PS00817">
    <property type="entry name" value="EPO_TPO"/>
    <property type="match status" value="1"/>
</dbReference>
<proteinExistence type="evidence at protein level"/>
<sequence length="353" mass="37823">MELTELLLVVMLLLTARLTLSSPAPPACDLRVLSKLLRDSHVLHSRLSQCPEVHPLPTPVLLPAVDFSLGEWKTQMEETKAQDILGAVTLLLEGVMAARGQLGPTCLSSLLGQLSGQVRLLLGALQSLLGTQLPPQGRTTAHKDPNAIFLSFQHLLRGKVRFLMLVGGSTLCVRRAPPTTAVPSRTSLVLTLNELPNRTSGLLETNFTASARTTGSGLLKWQQGFRAKIPGLLNQTSRSLDQIPGYLNRIHELLNGTRGLFPGPSRRTLGAPDISSGTSDTGSLPPNLQPGYSPSPTHPPTGQYTLFPLPPTLPTPVVQLHPLLPDPSAPTPTPTSPLLNTSYTHSQNLSQEG</sequence>
<keyword id="KW-0002">3D-structure</keyword>
<keyword id="KW-0025">Alternative splicing</keyword>
<keyword id="KW-0202">Cytokine</keyword>
<keyword id="KW-0225">Disease variant</keyword>
<keyword id="KW-1015">Disulfide bond</keyword>
<keyword id="KW-0325">Glycoprotein</keyword>
<keyword id="KW-0372">Hormone</keyword>
<keyword id="KW-1185">Reference proteome</keyword>
<keyword id="KW-0964">Secreted</keyword>
<keyword id="KW-0732">Signal</keyword>
<name>TPO_HUMAN</name>
<gene>
    <name type="primary">THPO</name>
    <name type="synonym">MGDF</name>
</gene>
<organism>
    <name type="scientific">Homo sapiens</name>
    <name type="common">Human</name>
    <dbReference type="NCBI Taxonomy" id="9606"/>
    <lineage>
        <taxon>Eukaryota</taxon>
        <taxon>Metazoa</taxon>
        <taxon>Chordata</taxon>
        <taxon>Craniata</taxon>
        <taxon>Vertebrata</taxon>
        <taxon>Euteleostomi</taxon>
        <taxon>Mammalia</taxon>
        <taxon>Eutheria</taxon>
        <taxon>Euarchontoglires</taxon>
        <taxon>Primates</taxon>
        <taxon>Haplorrhini</taxon>
        <taxon>Catarrhini</taxon>
        <taxon>Hominidae</taxon>
        <taxon>Homo</taxon>
    </lineage>
</organism>
<comment type="function">
    <text evidence="4 7">Lineage-specific cytokine affecting the proliferation and maturation of megakaryocytes from their committed progenitor cells. It acts at a late stage of megakaryocyte development. It may be the major physiological regulator of circulating platelets.</text>
</comment>
<comment type="subunit">
    <text evidence="10">Interacts with MPL/TPOR (PubMed:37633268).</text>
</comment>
<comment type="subcellular location">
    <subcellularLocation>
        <location evidence="8 11">Secreted</location>
    </subcellularLocation>
</comment>
<comment type="alternative products">
    <event type="alternative splicing"/>
    <isoform>
        <id>P40225-1</id>
        <name>1</name>
        <sequence type="displayed"/>
    </isoform>
    <isoform>
        <id>P40225-2</id>
        <name>2</name>
        <name>TPO-2</name>
        <sequence type="described" ref="VSP_001450"/>
    </isoform>
    <isoform>
        <id>P40225-3</id>
        <name>3</name>
        <name>Truncated</name>
        <sequence type="described" ref="VSP_001451"/>
    </isoform>
</comment>
<comment type="domain">
    <text>Two-domain structure with an erythropoietin-like N-terminal and a Ser/Pro/Thr-rich C-terminal.</text>
</comment>
<comment type="disease" evidence="13">
    <disease id="DI-01538">
        <name>Thrombocythemia 1</name>
        <acronym>THCYT1</acronym>
        <description>A myeloproliferative disorder characterized by excessive platelet production, resulting in increased numbers of circulating platelets. It can be associated with spontaneous hemorrhages and thrombotic episodes.</description>
        <dbReference type="MIM" id="187950"/>
    </disease>
    <text>The disease is caused by variants affecting the gene represented in this entry.</text>
</comment>
<comment type="disease" evidence="4 6 7 9">
    <disease id="DI-06746">
        <name>Amegakaryocytic thrombocytopenia, congenital, 2</name>
        <acronym>CAMT2</acronym>
        <description>A form of congenital amegakaryocytic thrombocytopenia, a hematologic disorder characterized by severe reduction of megakaryocytes and platelets at birth, and evolving into generalized bone marrow aplasia during childhood. CAMT2 is an autosomal recessive form. Most patients present with thrombocytopenia that progresses to pancytopenia.</description>
        <dbReference type="MIM" id="620481"/>
    </disease>
    <text>The disease is caused by variants affecting the gene represented in this entry.</text>
</comment>
<comment type="disease" evidence="5 8">
    <disease id="DI-06745">
        <name>Thrombocytopenia 9</name>
        <acronym>THC9</acronym>
        <description>A form of thrombocytopenia, a hematologic disorder defined by a decrease in the number of platelets in circulating blood, resulting in the potential for increased bleeding and decreased ability for clotting. THC9 is an autosomal dominant form characterized by low platelet counts in the absence of significant bleeding tendency. Some individuals may have mild mucocutaneous bleeding, whereas others may be asymptomatic.</description>
        <dbReference type="MIM" id="620478"/>
    </disease>
    <text>The disease is caused by variants affecting the gene represented in this entry.</text>
</comment>
<comment type="similarity">
    <text evidence="15">Belongs to the EPO/TPO family.</text>
</comment>
<feature type="signal peptide">
    <location>
        <begin position="1"/>
        <end position="21"/>
    </location>
</feature>
<feature type="chain" id="PRO_0000008411" description="Thrombopoietin">
    <location>
        <begin position="22"/>
        <end position="353"/>
    </location>
</feature>
<feature type="region of interest" description="Disordered" evidence="2">
    <location>
        <begin position="257"/>
        <end position="353"/>
    </location>
</feature>
<feature type="compositionally biased region" description="Polar residues" evidence="2">
    <location>
        <begin position="275"/>
        <end position="304"/>
    </location>
</feature>
<feature type="compositionally biased region" description="Pro residues" evidence="2">
    <location>
        <begin position="324"/>
        <end position="335"/>
    </location>
</feature>
<feature type="compositionally biased region" description="Polar residues" evidence="2">
    <location>
        <begin position="343"/>
        <end position="353"/>
    </location>
</feature>
<feature type="glycosylation site" description="O-linked (GalNAc...) serine" evidence="12">
    <location>
        <position position="22"/>
    </location>
</feature>
<feature type="glycosylation site" description="O-linked (GalNAc...) threonine" evidence="12">
    <location>
        <position position="58"/>
    </location>
</feature>
<feature type="glycosylation site" description="O-linked (GalNAc...) threonine" evidence="12">
    <location>
        <position position="131"/>
    </location>
</feature>
<feature type="glycosylation site" description="O-linked (GalNAc...) threonine" evidence="12">
    <location>
        <position position="179"/>
    </location>
</feature>
<feature type="glycosylation site" description="O-linked (GalNAc...) threonine" evidence="12">
    <location>
        <position position="180"/>
    </location>
</feature>
<feature type="glycosylation site" description="O-linked (GalNAc...) serine" evidence="12">
    <location>
        <position position="184"/>
    </location>
</feature>
<feature type="glycosylation site" description="N-linked (GlcNAc...) (complex) asparagine" evidence="12">
    <location>
        <position position="197"/>
    </location>
</feature>
<feature type="glycosylation site" description="N-linked (GlcNAc...) (complex) asparagine" evidence="12">
    <location>
        <position position="206"/>
    </location>
</feature>
<feature type="glycosylation site" description="O-linked (GalNAc...) threonine" evidence="12">
    <location>
        <position position="213"/>
    </location>
</feature>
<feature type="glycosylation site" description="N-linked (GlcNAc...) (complex) asparagine" evidence="12">
    <location>
        <position position="234"/>
    </location>
</feature>
<feature type="glycosylation site" description="N-linked (GlcNAc...) (complex) asparagine" evidence="12">
    <location>
        <position position="255"/>
    </location>
</feature>
<feature type="glycosylation site" description="O-linked (GalNAc...) serine" evidence="12">
    <location>
        <position position="265"/>
    </location>
</feature>
<feature type="glycosylation site" description="N-linked (GlcNAc...) asparagine" evidence="1">
    <location>
        <position position="340"/>
    </location>
</feature>
<feature type="glycosylation site" description="N-linked (GlcNAc...) asparagine" evidence="1">
    <location>
        <position position="348"/>
    </location>
</feature>
<feature type="disulfide bond" evidence="3 10 16 17 18">
    <location>
        <begin position="28"/>
        <end position="172"/>
    </location>
</feature>
<feature type="disulfide bond" evidence="3 10 16 17 18">
    <location>
        <begin position="50"/>
        <end position="106"/>
    </location>
</feature>
<feature type="splice variant" id="VSP_001450" description="In isoform 2." evidence="14">
    <location>
        <begin position="133"/>
        <end position="136"/>
    </location>
</feature>
<feature type="splice variant" id="VSP_001451" description="In isoform 3." evidence="15">
    <location>
        <begin position="160"/>
        <end position="198"/>
    </location>
</feature>
<feature type="sequence variant" id="VAR_011795" description="In dbSNP:rs1042346.">
    <original>L</original>
    <variation>P</variation>
    <location>
        <position position="14"/>
    </location>
</feature>
<feature type="sequence variant" id="VAR_088903" description="In THC9; likely pathogenic." evidence="5">
    <location>
        <begin position="31"/>
        <end position="353"/>
    </location>
</feature>
<feature type="sequence variant" id="VAR_088904" description="In CAMT2; likely pathogenic; severely decreased function in thrombopoietin-mediated signaling pathway; results in reduced protein secretion; does not affect protein degradation; dbSNP:rs760797899." evidence="4 7">
    <original>R</original>
    <variation>C</variation>
    <location>
        <position position="38"/>
    </location>
</feature>
<feature type="sequence variant" id="VAR_088905" description="In THC9 and CAMT2; likely pathogenic; results in reduced protein secretion; dbSNP:rs1273225808." evidence="6 8">
    <original>R</original>
    <variation>W</variation>
    <location>
        <position position="99"/>
    </location>
</feature>
<feature type="sequence variant" id="VAR_011796" description="In dbSNP:rs1126665.">
    <original>G</original>
    <variation>E</variation>
    <location>
        <position position="116"/>
    </location>
</feature>
<feature type="sequence variant" id="VAR_088906" description="In CAMT2; likely pathogenic; severely decreased function in thrombopoietin-mediated signaling pathway; results in reduced protein secretion; does not affect protein degradation; dbSNP:rs1181555052." evidence="7">
    <original>R</original>
    <variation>C</variation>
    <location>
        <position position="119"/>
    </location>
</feature>
<feature type="sequence variant" id="VAR_088907" description="In CAMT2; likely pathogenic." evidence="6">
    <location>
        <begin position="157"/>
        <end position="353"/>
    </location>
</feature>
<feature type="sequence conflict" description="In Ref. 8; AAB03392/AAB03393/AAB03394." evidence="15" ref="8">
    <original>R</original>
    <variation>K</variation>
    <location>
        <position position="46"/>
    </location>
</feature>
<feature type="sequence conflict" description="In Ref. 7; AAA74083." evidence="15" ref="7">
    <original>M</original>
    <variation>MSQ</variation>
    <location>
        <position position="76"/>
    </location>
</feature>
<feature type="sequence conflict" description="In Ref. 2; AAA50553." evidence="15" ref="2">
    <original>Q</original>
    <variation>E</variation>
    <location>
        <position position="113"/>
    </location>
</feature>
<feature type="sequence conflict" description="In Ref. 7; AAA74083." evidence="15" ref="7">
    <original>T</original>
    <variation>P</variation>
    <location>
        <position position="131"/>
    </location>
</feature>
<feature type="sequence conflict" description="In Ref. 8; AAB03393/AAB03394." evidence="15" ref="8">
    <original>G</original>
    <variation>E</variation>
    <location>
        <position position="277"/>
    </location>
</feature>
<feature type="sequence conflict" description="In Ref. 8; AAB03393/AAB03394." evidence="15" ref="8">
    <original>S</original>
    <variation>C</variation>
    <location>
        <position position="346"/>
    </location>
</feature>
<feature type="helix" evidence="21">
    <location>
        <begin position="26"/>
        <end position="28"/>
    </location>
</feature>
<feature type="helix" evidence="19">
    <location>
        <begin position="32"/>
        <end position="45"/>
    </location>
</feature>
<feature type="helix" evidence="19">
    <location>
        <begin position="46"/>
        <end position="48"/>
    </location>
</feature>
<feature type="strand" evidence="19">
    <location>
        <begin position="49"/>
        <end position="52"/>
    </location>
</feature>
<feature type="strand" evidence="19">
    <location>
        <begin position="60"/>
        <end position="63"/>
    </location>
</feature>
<feature type="helix" evidence="19">
    <location>
        <begin position="70"/>
        <end position="74"/>
    </location>
</feature>
<feature type="helix" evidence="19">
    <location>
        <begin position="77"/>
        <end position="98"/>
    </location>
</feature>
<feature type="turn" evidence="19">
    <location>
        <begin position="99"/>
        <end position="101"/>
    </location>
</feature>
<feature type="strand" evidence="19">
    <location>
        <begin position="104"/>
        <end position="106"/>
    </location>
</feature>
<feature type="helix" evidence="19">
    <location>
        <begin position="107"/>
        <end position="110"/>
    </location>
</feature>
<feature type="helix" evidence="19">
    <location>
        <begin position="113"/>
        <end position="129"/>
    </location>
</feature>
<feature type="strand" evidence="19">
    <location>
        <begin position="139"/>
        <end position="143"/>
    </location>
</feature>
<feature type="helix" evidence="19">
    <location>
        <begin position="145"/>
        <end position="147"/>
    </location>
</feature>
<feature type="helix" evidence="19">
    <location>
        <begin position="148"/>
        <end position="157"/>
    </location>
</feature>
<feature type="turn" evidence="19">
    <location>
        <begin position="158"/>
        <end position="160"/>
    </location>
</feature>
<feature type="helix" evidence="19">
    <location>
        <begin position="161"/>
        <end position="163"/>
    </location>
</feature>
<feature type="strand" evidence="20">
    <location>
        <begin position="165"/>
        <end position="167"/>
    </location>
</feature>
<feature type="helix" evidence="21">
    <location>
        <begin position="168"/>
        <end position="170"/>
    </location>
</feature>
<protein>
    <recommendedName>
        <fullName>Thrombopoietin</fullName>
    </recommendedName>
    <alternativeName>
        <fullName>C-mpl ligand</fullName>
        <shortName>ML</shortName>
    </alternativeName>
    <alternativeName>
        <fullName>Megakaryocyte colony-stimulating factor</fullName>
    </alternativeName>
    <alternativeName>
        <fullName>Megakaryocyte growth and development factor</fullName>
        <shortName>MGDF</shortName>
    </alternativeName>
    <alternativeName>
        <fullName>Myeloproliferative leukemia virus oncogene ligand</fullName>
    </alternativeName>
</protein>